<gene>
    <name evidence="1" type="primary">lipB</name>
    <name type="ordered locus">YPA_2500</name>
</gene>
<name>LIPB_YERPA</name>
<feature type="chain" id="PRO_1000001145" description="Octanoyltransferase">
    <location>
        <begin position="1"/>
        <end position="233"/>
    </location>
</feature>
<feature type="domain" description="BPL/LPL catalytic" evidence="2">
    <location>
        <begin position="36"/>
        <end position="211"/>
    </location>
</feature>
<feature type="active site" description="Acyl-thioester intermediate" evidence="1">
    <location>
        <position position="173"/>
    </location>
</feature>
<feature type="binding site" evidence="1">
    <location>
        <begin position="75"/>
        <end position="82"/>
    </location>
    <ligand>
        <name>substrate</name>
    </ligand>
</feature>
<feature type="binding site" evidence="1">
    <location>
        <begin position="142"/>
        <end position="144"/>
    </location>
    <ligand>
        <name>substrate</name>
    </ligand>
</feature>
<feature type="binding site" evidence="1">
    <location>
        <begin position="155"/>
        <end position="157"/>
    </location>
    <ligand>
        <name>substrate</name>
    </ligand>
</feature>
<feature type="site" description="Lowers pKa of active site Cys" evidence="1">
    <location>
        <position position="139"/>
    </location>
</feature>
<dbReference type="EC" id="2.3.1.181" evidence="1"/>
<dbReference type="EMBL" id="CP000308">
    <property type="protein sequence ID" value="ABG14464.1"/>
    <property type="molecule type" value="Genomic_DNA"/>
</dbReference>
<dbReference type="RefSeq" id="WP_002218201.1">
    <property type="nucleotide sequence ID" value="NZ_CP009906.1"/>
</dbReference>
<dbReference type="SMR" id="Q1C508"/>
<dbReference type="GeneID" id="57976096"/>
<dbReference type="KEGG" id="ypa:YPA_2500"/>
<dbReference type="UniPathway" id="UPA00538">
    <property type="reaction ID" value="UER00592"/>
</dbReference>
<dbReference type="Proteomes" id="UP000001971">
    <property type="component" value="Chromosome"/>
</dbReference>
<dbReference type="GO" id="GO:0005737">
    <property type="term" value="C:cytoplasm"/>
    <property type="evidence" value="ECO:0007669"/>
    <property type="project" value="UniProtKB-SubCell"/>
</dbReference>
<dbReference type="GO" id="GO:0033819">
    <property type="term" value="F:lipoyl(octanoyl) transferase activity"/>
    <property type="evidence" value="ECO:0007669"/>
    <property type="project" value="UniProtKB-EC"/>
</dbReference>
<dbReference type="GO" id="GO:0036211">
    <property type="term" value="P:protein modification process"/>
    <property type="evidence" value="ECO:0007669"/>
    <property type="project" value="InterPro"/>
</dbReference>
<dbReference type="CDD" id="cd16444">
    <property type="entry name" value="LipB"/>
    <property type="match status" value="1"/>
</dbReference>
<dbReference type="FunFam" id="3.30.930.10:FF:000020">
    <property type="entry name" value="Octanoyltransferase"/>
    <property type="match status" value="1"/>
</dbReference>
<dbReference type="Gene3D" id="3.30.930.10">
    <property type="entry name" value="Bira Bifunctional Protein, Domain 2"/>
    <property type="match status" value="1"/>
</dbReference>
<dbReference type="HAMAP" id="MF_00013">
    <property type="entry name" value="LipB"/>
    <property type="match status" value="1"/>
</dbReference>
<dbReference type="InterPro" id="IPR045864">
    <property type="entry name" value="aa-tRNA-synth_II/BPL/LPL"/>
</dbReference>
<dbReference type="InterPro" id="IPR004143">
    <property type="entry name" value="BPL_LPL_catalytic"/>
</dbReference>
<dbReference type="InterPro" id="IPR000544">
    <property type="entry name" value="Octanoyltransferase"/>
</dbReference>
<dbReference type="InterPro" id="IPR020605">
    <property type="entry name" value="Octanoyltransferase_CS"/>
</dbReference>
<dbReference type="NCBIfam" id="TIGR00214">
    <property type="entry name" value="lipB"/>
    <property type="match status" value="1"/>
</dbReference>
<dbReference type="NCBIfam" id="NF010922">
    <property type="entry name" value="PRK14342.1"/>
    <property type="match status" value="1"/>
</dbReference>
<dbReference type="PANTHER" id="PTHR10993:SF7">
    <property type="entry name" value="LIPOYLTRANSFERASE 2, MITOCHONDRIAL-RELATED"/>
    <property type="match status" value="1"/>
</dbReference>
<dbReference type="PANTHER" id="PTHR10993">
    <property type="entry name" value="OCTANOYLTRANSFERASE"/>
    <property type="match status" value="1"/>
</dbReference>
<dbReference type="Pfam" id="PF21948">
    <property type="entry name" value="LplA-B_cat"/>
    <property type="match status" value="1"/>
</dbReference>
<dbReference type="PIRSF" id="PIRSF016262">
    <property type="entry name" value="LPLase"/>
    <property type="match status" value="1"/>
</dbReference>
<dbReference type="SUPFAM" id="SSF55681">
    <property type="entry name" value="Class II aaRS and biotin synthetases"/>
    <property type="match status" value="1"/>
</dbReference>
<dbReference type="PROSITE" id="PS51733">
    <property type="entry name" value="BPL_LPL_CATALYTIC"/>
    <property type="match status" value="1"/>
</dbReference>
<dbReference type="PROSITE" id="PS01313">
    <property type="entry name" value="LIPB"/>
    <property type="match status" value="1"/>
</dbReference>
<comment type="function">
    <text evidence="1">Catalyzes the transfer of endogenously produced octanoic acid from octanoyl-acyl-carrier-protein onto the lipoyl domains of lipoate-dependent enzymes. Lipoyl-ACP can also act as a substrate although octanoyl-ACP is likely to be the physiological substrate.</text>
</comment>
<comment type="catalytic activity">
    <reaction evidence="1">
        <text>octanoyl-[ACP] + L-lysyl-[protein] = N(6)-octanoyl-L-lysyl-[protein] + holo-[ACP] + H(+)</text>
        <dbReference type="Rhea" id="RHEA:17665"/>
        <dbReference type="Rhea" id="RHEA-COMP:9636"/>
        <dbReference type="Rhea" id="RHEA-COMP:9685"/>
        <dbReference type="Rhea" id="RHEA-COMP:9752"/>
        <dbReference type="Rhea" id="RHEA-COMP:9928"/>
        <dbReference type="ChEBI" id="CHEBI:15378"/>
        <dbReference type="ChEBI" id="CHEBI:29969"/>
        <dbReference type="ChEBI" id="CHEBI:64479"/>
        <dbReference type="ChEBI" id="CHEBI:78463"/>
        <dbReference type="ChEBI" id="CHEBI:78809"/>
        <dbReference type="EC" id="2.3.1.181"/>
    </reaction>
</comment>
<comment type="pathway">
    <text evidence="1">Protein modification; protein lipoylation via endogenous pathway; protein N(6)-(lipoyl)lysine from octanoyl-[acyl-carrier-protein]: step 1/2.</text>
</comment>
<comment type="subcellular location">
    <subcellularLocation>
        <location evidence="1">Cytoplasm</location>
    </subcellularLocation>
</comment>
<comment type="miscellaneous">
    <text evidence="1">In the reaction, the free carboxyl group of octanoic acid is attached via an amide linkage to the epsilon-amino group of a specific lysine residue of lipoyl domains of lipoate-dependent enzymes.</text>
</comment>
<comment type="similarity">
    <text evidence="1">Belongs to the LipB family.</text>
</comment>
<sequence length="233" mass="25995">MMPRLQQHKIILRQLGLQPYAPVSQAMHNFTEFRTDTTPDEIWLVEHQHVFTQGQAGKAEHVLMPGDIPVIQSDRGGQVTYHGPGQQVMYVMVDLKRAKIGVRQLVTAIENTVIETLAHFNIDSHARPDAPGVYVEQQKICSLGLRIRRGCSFHGLALNIAMDLEPFQRINPCGYAGMQMTQVSALQPGVTVADVQPVLVREFTRQLGYPTAKLQPWSLSDYLLSSHSSSSVL</sequence>
<protein>
    <recommendedName>
        <fullName evidence="1">Octanoyltransferase</fullName>
        <ecNumber evidence="1">2.3.1.181</ecNumber>
    </recommendedName>
    <alternativeName>
        <fullName evidence="1">Lipoate-protein ligase B</fullName>
    </alternativeName>
    <alternativeName>
        <fullName evidence="1">Lipoyl/octanoyl transferase</fullName>
    </alternativeName>
    <alternativeName>
        <fullName evidence="1">Octanoyl-[acyl-carrier-protein]-protein N-octanoyltransferase</fullName>
    </alternativeName>
</protein>
<reference key="1">
    <citation type="journal article" date="2006" name="J. Bacteriol.">
        <title>Complete genome sequence of Yersinia pestis strains Antiqua and Nepal516: evidence of gene reduction in an emerging pathogen.</title>
        <authorList>
            <person name="Chain P.S.G."/>
            <person name="Hu P."/>
            <person name="Malfatti S.A."/>
            <person name="Radnedge L."/>
            <person name="Larimer F."/>
            <person name="Vergez L.M."/>
            <person name="Worsham P."/>
            <person name="Chu M.C."/>
            <person name="Andersen G.L."/>
        </authorList>
    </citation>
    <scope>NUCLEOTIDE SEQUENCE [LARGE SCALE GENOMIC DNA]</scope>
    <source>
        <strain>Antiqua</strain>
    </source>
</reference>
<keyword id="KW-0012">Acyltransferase</keyword>
<keyword id="KW-0963">Cytoplasm</keyword>
<keyword id="KW-0808">Transferase</keyword>
<evidence type="ECO:0000255" key="1">
    <source>
        <dbReference type="HAMAP-Rule" id="MF_00013"/>
    </source>
</evidence>
<evidence type="ECO:0000255" key="2">
    <source>
        <dbReference type="PROSITE-ProRule" id="PRU01067"/>
    </source>
</evidence>
<organism>
    <name type="scientific">Yersinia pestis bv. Antiqua (strain Antiqua)</name>
    <dbReference type="NCBI Taxonomy" id="360102"/>
    <lineage>
        <taxon>Bacteria</taxon>
        <taxon>Pseudomonadati</taxon>
        <taxon>Pseudomonadota</taxon>
        <taxon>Gammaproteobacteria</taxon>
        <taxon>Enterobacterales</taxon>
        <taxon>Yersiniaceae</taxon>
        <taxon>Yersinia</taxon>
    </lineage>
</organism>
<accession>Q1C508</accession>
<proteinExistence type="inferred from homology"/>